<organism>
    <name type="scientific">Drosophila melanogaster</name>
    <name type="common">Fruit fly</name>
    <dbReference type="NCBI Taxonomy" id="7227"/>
    <lineage>
        <taxon>Eukaryota</taxon>
        <taxon>Metazoa</taxon>
        <taxon>Ecdysozoa</taxon>
        <taxon>Arthropoda</taxon>
        <taxon>Hexapoda</taxon>
        <taxon>Insecta</taxon>
        <taxon>Pterygota</taxon>
        <taxon>Neoptera</taxon>
        <taxon>Endopterygota</taxon>
        <taxon>Diptera</taxon>
        <taxon>Brachycera</taxon>
        <taxon>Muscomorpha</taxon>
        <taxon>Ephydroidea</taxon>
        <taxon>Drosophilidae</taxon>
        <taxon>Drosophila</taxon>
        <taxon>Sophophora</taxon>
    </lineage>
</organism>
<reference key="1">
    <citation type="journal article" date="2004" name="Nat. Struct. Mol. Biol.">
        <title>Genome-wide analysis of mRNAs regulated by the THO complex in Drosophila.</title>
        <authorList>
            <person name="Rehwinkel J."/>
            <person name="Herold A."/>
            <person name="Gari K."/>
            <person name="Koecher T."/>
            <person name="Rode M."/>
            <person name="Ciccarelli F.L."/>
            <person name="Wilm M."/>
            <person name="Izaurralde E."/>
        </authorList>
    </citation>
    <scope>NUCLEOTIDE SEQUENCE [MRNA] (ISOFORM B)</scope>
    <scope>FUNCTION</scope>
    <scope>IDENTIFICATION IN THE THO COMPLEX</scope>
    <source>
        <tissue>Embryo</tissue>
    </source>
</reference>
<reference key="2">
    <citation type="journal article" date="2000" name="Science">
        <title>The genome sequence of Drosophila melanogaster.</title>
        <authorList>
            <person name="Adams M.D."/>
            <person name="Celniker S.E."/>
            <person name="Holt R.A."/>
            <person name="Evans C.A."/>
            <person name="Gocayne J.D."/>
            <person name="Amanatides P.G."/>
            <person name="Scherer S.E."/>
            <person name="Li P.W."/>
            <person name="Hoskins R.A."/>
            <person name="Galle R.F."/>
            <person name="George R.A."/>
            <person name="Lewis S.E."/>
            <person name="Richards S."/>
            <person name="Ashburner M."/>
            <person name="Henderson S.N."/>
            <person name="Sutton G.G."/>
            <person name="Wortman J.R."/>
            <person name="Yandell M.D."/>
            <person name="Zhang Q."/>
            <person name="Chen L.X."/>
            <person name="Brandon R.C."/>
            <person name="Rogers Y.-H.C."/>
            <person name="Blazej R.G."/>
            <person name="Champe M."/>
            <person name="Pfeiffer B.D."/>
            <person name="Wan K.H."/>
            <person name="Doyle C."/>
            <person name="Baxter E.G."/>
            <person name="Helt G."/>
            <person name="Nelson C.R."/>
            <person name="Miklos G.L.G."/>
            <person name="Abril J.F."/>
            <person name="Agbayani A."/>
            <person name="An H.-J."/>
            <person name="Andrews-Pfannkoch C."/>
            <person name="Baldwin D."/>
            <person name="Ballew R.M."/>
            <person name="Basu A."/>
            <person name="Baxendale J."/>
            <person name="Bayraktaroglu L."/>
            <person name="Beasley E.M."/>
            <person name="Beeson K.Y."/>
            <person name="Benos P.V."/>
            <person name="Berman B.P."/>
            <person name="Bhandari D."/>
            <person name="Bolshakov S."/>
            <person name="Borkova D."/>
            <person name="Botchan M.R."/>
            <person name="Bouck J."/>
            <person name="Brokstein P."/>
            <person name="Brottier P."/>
            <person name="Burtis K.C."/>
            <person name="Busam D.A."/>
            <person name="Butler H."/>
            <person name="Cadieu E."/>
            <person name="Center A."/>
            <person name="Chandra I."/>
            <person name="Cherry J.M."/>
            <person name="Cawley S."/>
            <person name="Dahlke C."/>
            <person name="Davenport L.B."/>
            <person name="Davies P."/>
            <person name="de Pablos B."/>
            <person name="Delcher A."/>
            <person name="Deng Z."/>
            <person name="Mays A.D."/>
            <person name="Dew I."/>
            <person name="Dietz S.M."/>
            <person name="Dodson K."/>
            <person name="Doup L.E."/>
            <person name="Downes M."/>
            <person name="Dugan-Rocha S."/>
            <person name="Dunkov B.C."/>
            <person name="Dunn P."/>
            <person name="Durbin K.J."/>
            <person name="Evangelista C.C."/>
            <person name="Ferraz C."/>
            <person name="Ferriera S."/>
            <person name="Fleischmann W."/>
            <person name="Fosler C."/>
            <person name="Gabrielian A.E."/>
            <person name="Garg N.S."/>
            <person name="Gelbart W.M."/>
            <person name="Glasser K."/>
            <person name="Glodek A."/>
            <person name="Gong F."/>
            <person name="Gorrell J.H."/>
            <person name="Gu Z."/>
            <person name="Guan P."/>
            <person name="Harris M."/>
            <person name="Harris N.L."/>
            <person name="Harvey D.A."/>
            <person name="Heiman T.J."/>
            <person name="Hernandez J.R."/>
            <person name="Houck J."/>
            <person name="Hostin D."/>
            <person name="Houston K.A."/>
            <person name="Howland T.J."/>
            <person name="Wei M.-H."/>
            <person name="Ibegwam C."/>
            <person name="Jalali M."/>
            <person name="Kalush F."/>
            <person name="Karpen G.H."/>
            <person name="Ke Z."/>
            <person name="Kennison J.A."/>
            <person name="Ketchum K.A."/>
            <person name="Kimmel B.E."/>
            <person name="Kodira C.D."/>
            <person name="Kraft C.L."/>
            <person name="Kravitz S."/>
            <person name="Kulp D."/>
            <person name="Lai Z."/>
            <person name="Lasko P."/>
            <person name="Lei Y."/>
            <person name="Levitsky A.A."/>
            <person name="Li J.H."/>
            <person name="Li Z."/>
            <person name="Liang Y."/>
            <person name="Lin X."/>
            <person name="Liu X."/>
            <person name="Mattei B."/>
            <person name="McIntosh T.C."/>
            <person name="McLeod M.P."/>
            <person name="McPherson D."/>
            <person name="Merkulov G."/>
            <person name="Milshina N.V."/>
            <person name="Mobarry C."/>
            <person name="Morris J."/>
            <person name="Moshrefi A."/>
            <person name="Mount S.M."/>
            <person name="Moy M."/>
            <person name="Murphy B."/>
            <person name="Murphy L."/>
            <person name="Muzny D.M."/>
            <person name="Nelson D.L."/>
            <person name="Nelson D.R."/>
            <person name="Nelson K.A."/>
            <person name="Nixon K."/>
            <person name="Nusskern D.R."/>
            <person name="Pacleb J.M."/>
            <person name="Palazzolo M."/>
            <person name="Pittman G.S."/>
            <person name="Pan S."/>
            <person name="Pollard J."/>
            <person name="Puri V."/>
            <person name="Reese M.G."/>
            <person name="Reinert K."/>
            <person name="Remington K."/>
            <person name="Saunders R.D.C."/>
            <person name="Scheeler F."/>
            <person name="Shen H."/>
            <person name="Shue B.C."/>
            <person name="Siden-Kiamos I."/>
            <person name="Simpson M."/>
            <person name="Skupski M.P."/>
            <person name="Smith T.J."/>
            <person name="Spier E."/>
            <person name="Spradling A.C."/>
            <person name="Stapleton M."/>
            <person name="Strong R."/>
            <person name="Sun E."/>
            <person name="Svirskas R."/>
            <person name="Tector C."/>
            <person name="Turner R."/>
            <person name="Venter E."/>
            <person name="Wang A.H."/>
            <person name="Wang X."/>
            <person name="Wang Z.-Y."/>
            <person name="Wassarman D.A."/>
            <person name="Weinstock G.M."/>
            <person name="Weissenbach J."/>
            <person name="Williams S.M."/>
            <person name="Woodage T."/>
            <person name="Worley K.C."/>
            <person name="Wu D."/>
            <person name="Yang S."/>
            <person name="Yao Q.A."/>
            <person name="Ye J."/>
            <person name="Yeh R.-F."/>
            <person name="Zaveri J.S."/>
            <person name="Zhan M."/>
            <person name="Zhang G."/>
            <person name="Zhao Q."/>
            <person name="Zheng L."/>
            <person name="Zheng X.H."/>
            <person name="Zhong F.N."/>
            <person name="Zhong W."/>
            <person name="Zhou X."/>
            <person name="Zhu S.C."/>
            <person name="Zhu X."/>
            <person name="Smith H.O."/>
            <person name="Gibbs R.A."/>
            <person name="Myers E.W."/>
            <person name="Rubin G.M."/>
            <person name="Venter J.C."/>
        </authorList>
    </citation>
    <scope>NUCLEOTIDE SEQUENCE [LARGE SCALE GENOMIC DNA]</scope>
    <source>
        <strain>Berkeley</strain>
    </source>
</reference>
<reference key="3">
    <citation type="journal article" date="2002" name="Genome Biol.">
        <title>Annotation of the Drosophila melanogaster euchromatic genome: a systematic review.</title>
        <authorList>
            <person name="Misra S."/>
            <person name="Crosby M.A."/>
            <person name="Mungall C.J."/>
            <person name="Matthews B.B."/>
            <person name="Campbell K.S."/>
            <person name="Hradecky P."/>
            <person name="Huang Y."/>
            <person name="Kaminker J.S."/>
            <person name="Millburn G.H."/>
            <person name="Prochnik S.E."/>
            <person name="Smith C.D."/>
            <person name="Tupy J.L."/>
            <person name="Whitfield E.J."/>
            <person name="Bayraktaroglu L."/>
            <person name="Berman B.P."/>
            <person name="Bettencourt B.R."/>
            <person name="Celniker S.E."/>
            <person name="de Grey A.D.N.J."/>
            <person name="Drysdale R.A."/>
            <person name="Harris N.L."/>
            <person name="Richter J."/>
            <person name="Russo S."/>
            <person name="Schroeder A.J."/>
            <person name="Shu S.Q."/>
            <person name="Stapleton M."/>
            <person name="Yamada C."/>
            <person name="Ashburner M."/>
            <person name="Gelbart W.M."/>
            <person name="Rubin G.M."/>
            <person name="Lewis S.E."/>
        </authorList>
    </citation>
    <scope>GENOME REANNOTATION</scope>
    <scope>ALTERNATIVE SPLICING</scope>
    <source>
        <strain>Berkeley</strain>
    </source>
</reference>
<reference key="4">
    <citation type="journal article" date="2002" name="Genome Biol.">
        <title>A Drosophila full-length cDNA resource.</title>
        <authorList>
            <person name="Stapleton M."/>
            <person name="Carlson J.W."/>
            <person name="Brokstein P."/>
            <person name="Yu C."/>
            <person name="Champe M."/>
            <person name="George R.A."/>
            <person name="Guarin H."/>
            <person name="Kronmiller B."/>
            <person name="Pacleb J.M."/>
            <person name="Park S."/>
            <person name="Wan K.H."/>
            <person name="Rubin G.M."/>
            <person name="Celniker S.E."/>
        </authorList>
    </citation>
    <scope>NUCLEOTIDE SEQUENCE [LARGE SCALE MRNA] OF 7-287 (ISOFORM A)</scope>
    <source>
        <strain>Berkeley</strain>
        <tissue>Embryo</tissue>
    </source>
</reference>
<reference key="5">
    <citation type="journal article" date="2008" name="J. Proteome Res.">
        <title>Phosphoproteome analysis of Drosophila melanogaster embryos.</title>
        <authorList>
            <person name="Zhai B."/>
            <person name="Villen J."/>
            <person name="Beausoleil S.A."/>
            <person name="Mintseris J."/>
            <person name="Gygi S.P."/>
        </authorList>
    </citation>
    <scope>PHOSPHORYLATION [LARGE SCALE ANALYSIS] AT SER-216; SER-229; SER-256 AND SER-260</scope>
    <scope>IDENTIFICATION BY MASS SPECTROMETRY</scope>
    <source>
        <tissue>Embryo</tissue>
    </source>
</reference>
<keyword id="KW-0025">Alternative splicing</keyword>
<keyword id="KW-0175">Coiled coil</keyword>
<keyword id="KW-0963">Cytoplasm</keyword>
<keyword id="KW-0539">Nucleus</keyword>
<keyword id="KW-0597">Phosphoprotein</keyword>
<keyword id="KW-1185">Reference proteome</keyword>
<name>THOC7_DROME</name>
<protein>
    <recommendedName>
        <fullName>THO complex protein 7</fullName>
    </recommendedName>
</protein>
<proteinExistence type="evidence at protein level"/>
<accession>Q8IRJ8</accession>
<accession>Q1WWD6</accession>
<accession>Q9W0T8</accession>
<evidence type="ECO:0000250" key="1">
    <source>
        <dbReference type="UniProtKB" id="Q6I9Y2"/>
    </source>
</evidence>
<evidence type="ECO:0000255" key="2"/>
<evidence type="ECO:0000256" key="3">
    <source>
        <dbReference type="SAM" id="MobiDB-lite"/>
    </source>
</evidence>
<evidence type="ECO:0000269" key="4">
    <source>
    </source>
</evidence>
<evidence type="ECO:0000269" key="5">
    <source>
    </source>
</evidence>
<evidence type="ECO:0000303" key="6">
    <source>
    </source>
</evidence>
<evidence type="ECO:0000305" key="7"/>
<feature type="chain" id="PRO_0000310759" description="THO complex protein 7">
    <location>
        <begin position="1"/>
        <end position="288"/>
    </location>
</feature>
<feature type="region of interest" description="Disordered" evidence="3">
    <location>
        <begin position="196"/>
        <end position="265"/>
    </location>
</feature>
<feature type="coiled-coil region" evidence="2">
    <location>
        <begin position="95"/>
        <end position="178"/>
    </location>
</feature>
<feature type="compositionally biased region" description="Low complexity" evidence="3">
    <location>
        <begin position="201"/>
        <end position="210"/>
    </location>
</feature>
<feature type="compositionally biased region" description="Acidic residues" evidence="3">
    <location>
        <begin position="219"/>
        <end position="235"/>
    </location>
</feature>
<feature type="compositionally biased region" description="Basic and acidic residues" evidence="3">
    <location>
        <begin position="244"/>
        <end position="261"/>
    </location>
</feature>
<feature type="modified residue" description="Phosphoserine" evidence="5">
    <location>
        <position position="216"/>
    </location>
</feature>
<feature type="modified residue" description="Phosphoserine" evidence="5">
    <location>
        <position position="229"/>
    </location>
</feature>
<feature type="modified residue" description="Phosphoserine" evidence="5">
    <location>
        <position position="256"/>
    </location>
</feature>
<feature type="modified residue" description="Phosphoserine" evidence="5">
    <location>
        <position position="260"/>
    </location>
</feature>
<feature type="splice variant" id="VSP_037609" description="In isoform B." evidence="6">
    <location>
        <position position="25"/>
    </location>
</feature>
<gene>
    <name type="primary">thoc7</name>
    <name type="ORF">CG17143</name>
</gene>
<comment type="function">
    <text evidence="4">The THO complex is required for cell proliferation and for proper export of heat-shock mRNAs under heat stress.</text>
</comment>
<comment type="subunit">
    <text evidence="4">Part of the THO complex containing HPR1, THOC2, THOC5, THOC6 and THOC7.</text>
</comment>
<comment type="subcellular location">
    <subcellularLocation>
        <location evidence="1">Cytoplasm</location>
    </subcellularLocation>
    <subcellularLocation>
        <location evidence="1">Nucleus</location>
    </subcellularLocation>
    <subcellularLocation>
        <location evidence="1">Nucleus speckle</location>
    </subcellularLocation>
</comment>
<comment type="alternative products">
    <event type="alternative splicing"/>
    <isoform>
        <id>Q8IRJ8-2</id>
        <name>A</name>
        <sequence type="displayed"/>
    </isoform>
    <isoform>
        <id>Q8IRJ8-1</id>
        <name>B</name>
        <sequence type="described" ref="VSP_037609"/>
    </isoform>
</comment>
<comment type="similarity">
    <text evidence="7">Belongs to the THOC7 family.</text>
</comment>
<comment type="sequence caution" evidence="7">
    <conflict type="erroneous initiation">
        <sequence resource="EMBL-CDS" id="AAQ22544"/>
    </conflict>
    <text>Truncated N-terminus.</text>
</comment>
<comment type="sequence caution" evidence="7">
    <conflict type="frameshift">
        <sequence resource="EMBL-CDS" id="ABE01200"/>
    </conflict>
</comment>
<dbReference type="EMBL" id="AJ620302">
    <property type="protein sequence ID" value="CAF04325.1"/>
    <property type="molecule type" value="mRNA"/>
</dbReference>
<dbReference type="EMBL" id="AE014296">
    <property type="protein sequence ID" value="AAF47350.2"/>
    <property type="molecule type" value="Genomic_DNA"/>
</dbReference>
<dbReference type="EMBL" id="AE014296">
    <property type="protein sequence ID" value="AAN11424.1"/>
    <property type="molecule type" value="Genomic_DNA"/>
</dbReference>
<dbReference type="EMBL" id="BT010075">
    <property type="protein sequence ID" value="AAQ22544.1"/>
    <property type="status" value="ALT_INIT"/>
    <property type="molecule type" value="mRNA"/>
</dbReference>
<dbReference type="EMBL" id="BT024970">
    <property type="protein sequence ID" value="ABE01200.1"/>
    <property type="status" value="ALT_FRAME"/>
    <property type="molecule type" value="mRNA"/>
</dbReference>
<dbReference type="RefSeq" id="NP_612011.1">
    <molecule id="Q8IRJ8-1"/>
    <property type="nucleotide sequence ID" value="NM_138167.1"/>
</dbReference>
<dbReference type="RefSeq" id="NP_728489.2">
    <molecule id="Q8IRJ8-2"/>
    <property type="nucleotide sequence ID" value="NM_167804.2"/>
</dbReference>
<dbReference type="SMR" id="Q8IRJ8"/>
<dbReference type="BioGRID" id="63596">
    <property type="interactions" value="14"/>
</dbReference>
<dbReference type="ComplexPortal" id="CPX-2261">
    <property type="entry name" value="TREX transcription-export complex"/>
</dbReference>
<dbReference type="FunCoup" id="Q8IRJ8">
    <property type="interactions" value="1369"/>
</dbReference>
<dbReference type="IntAct" id="Q8IRJ8">
    <property type="interactions" value="5"/>
</dbReference>
<dbReference type="STRING" id="7227.FBpp0072425"/>
<dbReference type="TCDB" id="3.A.22.1.3">
    <property type="family name" value="the transcription-coupled trex/tap nuclear mrna export complex (trex) family"/>
</dbReference>
<dbReference type="iPTMnet" id="Q8IRJ8"/>
<dbReference type="PaxDb" id="7227-FBpp0072425"/>
<dbReference type="DNASU" id="38033"/>
<dbReference type="EnsemblMetazoa" id="FBtr0072526">
    <molecule id="Q8IRJ8-2"/>
    <property type="protein sequence ID" value="FBpp0072425"/>
    <property type="gene ID" value="FBgn0035110"/>
</dbReference>
<dbReference type="EnsemblMetazoa" id="FBtr0072527">
    <molecule id="Q8IRJ8-1"/>
    <property type="protein sequence ID" value="FBpp0072426"/>
    <property type="gene ID" value="FBgn0035110"/>
</dbReference>
<dbReference type="GeneID" id="38033"/>
<dbReference type="KEGG" id="dme:Dmel_CG17143"/>
<dbReference type="UCSC" id="CG17143-RA">
    <molecule id="Q8IRJ8-2"/>
    <property type="organism name" value="d. melanogaster"/>
</dbReference>
<dbReference type="AGR" id="FB:FBgn0035110"/>
<dbReference type="CTD" id="80145"/>
<dbReference type="FlyBase" id="FBgn0035110">
    <property type="gene designation" value="thoc7"/>
</dbReference>
<dbReference type="VEuPathDB" id="VectorBase:FBgn0035110"/>
<dbReference type="eggNOG" id="KOG3215">
    <property type="taxonomic scope" value="Eukaryota"/>
</dbReference>
<dbReference type="GeneTree" id="ENSGT00390000002873"/>
<dbReference type="InParanoid" id="Q8IRJ8"/>
<dbReference type="OMA" id="WANSKND"/>
<dbReference type="OrthoDB" id="205166at2759"/>
<dbReference type="PhylomeDB" id="Q8IRJ8"/>
<dbReference type="Reactome" id="R-DME-159236">
    <property type="pathway name" value="Transport of Mature mRNA derived from an Intron-Containing Transcript"/>
</dbReference>
<dbReference type="Reactome" id="R-DME-72187">
    <property type="pathway name" value="mRNA 3'-end processing"/>
</dbReference>
<dbReference type="Reactome" id="R-DME-73856">
    <property type="pathway name" value="RNA Polymerase II Transcription Termination"/>
</dbReference>
<dbReference type="SignaLink" id="Q8IRJ8"/>
<dbReference type="BioGRID-ORCS" id="38033">
    <property type="hits" value="0 hits in 1 CRISPR screen"/>
</dbReference>
<dbReference type="GenomeRNAi" id="38033"/>
<dbReference type="PRO" id="PR:Q8IRJ8"/>
<dbReference type="Proteomes" id="UP000000803">
    <property type="component" value="Chromosome 3L"/>
</dbReference>
<dbReference type="Bgee" id="FBgn0035110">
    <property type="expression patterns" value="Expressed in egg cell and 179 other cell types or tissues"/>
</dbReference>
<dbReference type="GO" id="GO:0005737">
    <property type="term" value="C:cytoplasm"/>
    <property type="evidence" value="ECO:0007669"/>
    <property type="project" value="UniProtKB-SubCell"/>
</dbReference>
<dbReference type="GO" id="GO:0016607">
    <property type="term" value="C:nuclear speck"/>
    <property type="evidence" value="ECO:0007669"/>
    <property type="project" value="UniProtKB-SubCell"/>
</dbReference>
<dbReference type="GO" id="GO:0005634">
    <property type="term" value="C:nucleus"/>
    <property type="evidence" value="ECO:0000314"/>
    <property type="project" value="FlyBase"/>
</dbReference>
<dbReference type="GO" id="GO:0032991">
    <property type="term" value="C:protein-containing complex"/>
    <property type="evidence" value="ECO:0000353"/>
    <property type="project" value="FlyBase"/>
</dbReference>
<dbReference type="GO" id="GO:0000347">
    <property type="term" value="C:THO complex"/>
    <property type="evidence" value="ECO:0000314"/>
    <property type="project" value="UniProtKB"/>
</dbReference>
<dbReference type="GO" id="GO:0000445">
    <property type="term" value="C:THO complex part of transcription export complex"/>
    <property type="evidence" value="ECO:0000318"/>
    <property type="project" value="GO_Central"/>
</dbReference>
<dbReference type="GO" id="GO:0000346">
    <property type="term" value="C:transcription export complex"/>
    <property type="evidence" value="ECO:0000250"/>
    <property type="project" value="FlyBase"/>
</dbReference>
<dbReference type="GO" id="GO:0006406">
    <property type="term" value="P:mRNA export from nucleus"/>
    <property type="evidence" value="ECO:0000318"/>
    <property type="project" value="GO_Central"/>
</dbReference>
<dbReference type="GO" id="GO:0031990">
    <property type="term" value="P:mRNA export from nucleus in response to heat stress"/>
    <property type="evidence" value="ECO:0000305"/>
    <property type="project" value="FlyBase"/>
</dbReference>
<dbReference type="GO" id="GO:0006397">
    <property type="term" value="P:mRNA processing"/>
    <property type="evidence" value="ECO:0007669"/>
    <property type="project" value="InterPro"/>
</dbReference>
<dbReference type="InterPro" id="IPR008501">
    <property type="entry name" value="THOC7/Mft1"/>
</dbReference>
<dbReference type="PANTHER" id="PTHR23405">
    <property type="entry name" value="MAINTENANCE OF KILLER 16 MAK16 PROTEIN-RELATED"/>
    <property type="match status" value="1"/>
</dbReference>
<dbReference type="PANTHER" id="PTHR23405:SF5">
    <property type="entry name" value="THO COMPLEX SUBUNIT 7 HOMOLOG"/>
    <property type="match status" value="1"/>
</dbReference>
<dbReference type="Pfam" id="PF05615">
    <property type="entry name" value="THOC7"/>
    <property type="match status" value="1"/>
</dbReference>
<sequence length="288" mass="33052">MSEQCQLRPHSDTLVRKLVEMNDEEIIKQRLLIDGDGTGEDRRIVVLLKQFLKWASDSLDSNPIMYDRLMAQFAQCKLTALKNVQTLQMIAGERDNYTQLVEHHEESIVLAKAEIESSKKELITAKQIRKNKMEYDLLASLIQDQPDRSETQRHIETIRREIDDLVQKKLKMERKFQKRRNDFTLLMYTIHELEQQLDQDSSSSASSSSSDCDARSEPDLDDNGIMEVSDEDDDLNNSTPTKFDGARGEPKYHSVSTEDSKAMSVEEDTVLELSIDKDEHDVDVAVAN</sequence>